<feature type="chain" id="PRO_0000424886" description="Serine endoprotease DegS">
    <location>
        <begin position="1"/>
        <end position="356"/>
    </location>
</feature>
<feature type="transmembrane region" description="Helical" evidence="3">
    <location>
        <begin position="5"/>
        <end position="27"/>
    </location>
</feature>
<feature type="domain" description="PDZ" evidence="4">
    <location>
        <begin position="256"/>
        <end position="341"/>
    </location>
</feature>
<feature type="active site" description="Charge relay system" evidence="2">
    <location>
        <position position="96"/>
    </location>
</feature>
<feature type="active site" description="Charge relay system" evidence="2">
    <location>
        <position position="126"/>
    </location>
</feature>
<feature type="active site" description="Charge relay system" evidence="2">
    <location>
        <position position="201"/>
    </location>
</feature>
<keyword id="KW-0997">Cell inner membrane</keyword>
<keyword id="KW-1003">Cell membrane</keyword>
<keyword id="KW-0378">Hydrolase</keyword>
<keyword id="KW-0472">Membrane</keyword>
<keyword id="KW-0645">Protease</keyword>
<keyword id="KW-0720">Serine protease</keyword>
<keyword id="KW-0812">Transmembrane</keyword>
<keyword id="KW-1133">Transmembrane helix</keyword>
<keyword id="KW-0843">Virulence</keyword>
<organism>
    <name type="scientific">Salmonella typhimurium (strain 14028s / SGSC 2262)</name>
    <dbReference type="NCBI Taxonomy" id="588858"/>
    <lineage>
        <taxon>Bacteria</taxon>
        <taxon>Pseudomonadati</taxon>
        <taxon>Pseudomonadota</taxon>
        <taxon>Gammaproteobacteria</taxon>
        <taxon>Enterobacterales</taxon>
        <taxon>Enterobacteriaceae</taxon>
        <taxon>Salmonella</taxon>
    </lineage>
</organism>
<protein>
    <recommendedName>
        <fullName>Serine endoprotease DegS</fullName>
        <ecNumber>3.4.21.107</ecNumber>
    </recommendedName>
    <alternativeName>
        <fullName>Site-1 protease DegS</fullName>
        <shortName>S1P protease DegS</shortName>
    </alternativeName>
    <alternativeName>
        <fullName>Site-1-type intramembrane protease</fullName>
    </alternativeName>
</protein>
<dbReference type="EC" id="3.4.21.107"/>
<dbReference type="EMBL" id="CP001363">
    <property type="protein sequence ID" value="ACY90437.1"/>
    <property type="molecule type" value="Genomic_DNA"/>
</dbReference>
<dbReference type="RefSeq" id="WP_000497705.1">
    <property type="nucleotide sequence ID" value="NZ_CP043402.1"/>
</dbReference>
<dbReference type="SMR" id="D0ZY51"/>
<dbReference type="MEROPS" id="S01.275"/>
<dbReference type="KEGG" id="seo:STM14_4041"/>
<dbReference type="PATRIC" id="fig|588858.6.peg.3706"/>
<dbReference type="HOGENOM" id="CLU_020120_2_2_6"/>
<dbReference type="BioCyc" id="SENT588858:STM14_RS17805-MONOMER"/>
<dbReference type="Proteomes" id="UP000002695">
    <property type="component" value="Chromosome"/>
</dbReference>
<dbReference type="GO" id="GO:0042597">
    <property type="term" value="C:periplasmic space"/>
    <property type="evidence" value="ECO:0007669"/>
    <property type="project" value="TreeGrafter"/>
</dbReference>
<dbReference type="GO" id="GO:0005886">
    <property type="term" value="C:plasma membrane"/>
    <property type="evidence" value="ECO:0007669"/>
    <property type="project" value="UniProtKB-SubCell"/>
</dbReference>
<dbReference type="GO" id="GO:0004252">
    <property type="term" value="F:serine-type endopeptidase activity"/>
    <property type="evidence" value="ECO:0007669"/>
    <property type="project" value="InterPro"/>
</dbReference>
<dbReference type="GO" id="GO:0006515">
    <property type="term" value="P:protein quality control for misfolded or incompletely synthesized proteins"/>
    <property type="evidence" value="ECO:0007669"/>
    <property type="project" value="TreeGrafter"/>
</dbReference>
<dbReference type="GO" id="GO:0006508">
    <property type="term" value="P:proteolysis"/>
    <property type="evidence" value="ECO:0000315"/>
    <property type="project" value="UniProtKB"/>
</dbReference>
<dbReference type="GO" id="GO:0009266">
    <property type="term" value="P:response to temperature stimulus"/>
    <property type="evidence" value="ECO:0000315"/>
    <property type="project" value="UniProtKB"/>
</dbReference>
<dbReference type="CDD" id="cd06777">
    <property type="entry name" value="cpPDZ_DegS"/>
    <property type="match status" value="1"/>
</dbReference>
<dbReference type="FunFam" id="2.40.10.10:FF:000001">
    <property type="entry name" value="Periplasmic serine protease DegS"/>
    <property type="match status" value="1"/>
</dbReference>
<dbReference type="FunFam" id="2.40.10.10:FF:000009">
    <property type="entry name" value="Serine endoprotease DegS, periplasmic"/>
    <property type="match status" value="1"/>
</dbReference>
<dbReference type="Gene3D" id="2.30.42.10">
    <property type="match status" value="1"/>
</dbReference>
<dbReference type="Gene3D" id="2.40.10.10">
    <property type="entry name" value="Trypsin-like serine proteases"/>
    <property type="match status" value="2"/>
</dbReference>
<dbReference type="InterPro" id="IPR001478">
    <property type="entry name" value="PDZ"/>
</dbReference>
<dbReference type="InterPro" id="IPR036034">
    <property type="entry name" value="PDZ_sf"/>
</dbReference>
<dbReference type="InterPro" id="IPR011783">
    <property type="entry name" value="Pept_S1C_DegS"/>
</dbReference>
<dbReference type="InterPro" id="IPR009003">
    <property type="entry name" value="Peptidase_S1_PA"/>
</dbReference>
<dbReference type="InterPro" id="IPR043504">
    <property type="entry name" value="Peptidase_S1_PA_chymotrypsin"/>
</dbReference>
<dbReference type="InterPro" id="IPR001940">
    <property type="entry name" value="Peptidase_S1C"/>
</dbReference>
<dbReference type="NCBIfam" id="NF008147">
    <property type="entry name" value="PRK10898.1"/>
    <property type="match status" value="1"/>
</dbReference>
<dbReference type="NCBIfam" id="TIGR02038">
    <property type="entry name" value="protease_degS"/>
    <property type="match status" value="1"/>
</dbReference>
<dbReference type="PANTHER" id="PTHR22939:SF101">
    <property type="entry name" value="PERIPLASMIC PH-DEPENDENT SERINE ENDOPROTEASE DEGQ"/>
    <property type="match status" value="1"/>
</dbReference>
<dbReference type="PANTHER" id="PTHR22939">
    <property type="entry name" value="SERINE PROTEASE FAMILY S1C HTRA-RELATED"/>
    <property type="match status" value="1"/>
</dbReference>
<dbReference type="Pfam" id="PF13180">
    <property type="entry name" value="PDZ_2"/>
    <property type="match status" value="1"/>
</dbReference>
<dbReference type="Pfam" id="PF13365">
    <property type="entry name" value="Trypsin_2"/>
    <property type="match status" value="1"/>
</dbReference>
<dbReference type="PRINTS" id="PR00834">
    <property type="entry name" value="PROTEASES2C"/>
</dbReference>
<dbReference type="SMART" id="SM00228">
    <property type="entry name" value="PDZ"/>
    <property type="match status" value="1"/>
</dbReference>
<dbReference type="SUPFAM" id="SSF50156">
    <property type="entry name" value="PDZ domain-like"/>
    <property type="match status" value="1"/>
</dbReference>
<dbReference type="SUPFAM" id="SSF50494">
    <property type="entry name" value="Trypsin-like serine proteases"/>
    <property type="match status" value="1"/>
</dbReference>
<dbReference type="PROSITE" id="PS50106">
    <property type="entry name" value="PDZ"/>
    <property type="match status" value="1"/>
</dbReference>
<gene>
    <name type="primary">degS</name>
    <name type="ordered locus">STM14_4041</name>
</gene>
<comment type="function">
    <text evidence="5">A site-1 protease (S1P) that cleaves the peptide bond between 'Val-148' and 'Ser-149' in RseA. When heat shock or other environmental stresses disrupt protein folding in the periplasm, DegS senses the accumulation of unassembled outer membrane porins (OMP) and then initiates RseA (anti sigma-E factor) degradation by cleaving its periplasmic domain, making it a substrate for subsequent cleavage by RseP. This cascade ultimately leads to the sigma-E-driven expression of a variety of factors dealing with folding stress in the periplasm and OMP assembly. Required for basal and heat shock-induced degradation of RseA but not for acid stress response in this strain.</text>
</comment>
<comment type="catalytic activity">
    <reaction>
        <text>Acts on substrates that are at least partially unfolded. The cleavage site P1 residue is normally between a pair of hydrophobic residues, such as Val-|-Val.</text>
        <dbReference type="EC" id="3.4.21.107"/>
    </reaction>
</comment>
<comment type="subunit">
    <text evidence="1">Homotrimer.</text>
</comment>
<comment type="subcellular location">
    <subcellularLocation>
        <location evidence="6">Cell inner membrane</location>
        <topology evidence="6">Single-pass membrane protein</topology>
    </subcellularLocation>
</comment>
<comment type="domain">
    <text evidence="5">Deletion of the PDZ domain eliminates the heat shock response of the sigma-E regulon, but not the acid stress response.</text>
</comment>
<comment type="disruption phenotype">
    <text evidence="5">Loss of heat shock but not acid stress response of sigma-E regulon. 10-fold decreased survival in acidified murine macrophages.</text>
</comment>
<comment type="miscellaneous">
    <text evidence="1">Regulated intramembrane proteolysis (RIP) occurs when an extracytoplasmic signal triggers a concerted proteolytic cascade to transmit information and elicit cellular responses. A membrane-spanning regulatory substrate protein is first cut extracytoplasmically (site-1 protease, S1P, this enzyme), then within the membrane itself (site-2 protease, S2P), while cytoplasmic proteases finish degrading the regulatory protein, liberating the effector protein (By similarity).</text>
</comment>
<comment type="similarity">
    <text evidence="6">Belongs to the peptidase S1C family.</text>
</comment>
<accession>D0ZY51</accession>
<name>DEGS_SALT1</name>
<proteinExistence type="inferred from homology"/>
<evidence type="ECO:0000250" key="1"/>
<evidence type="ECO:0000250" key="2">
    <source>
        <dbReference type="UniProtKB" id="P0AEE4"/>
    </source>
</evidence>
<evidence type="ECO:0000255" key="3"/>
<evidence type="ECO:0000255" key="4">
    <source>
        <dbReference type="PROSITE-ProRule" id="PRU00143"/>
    </source>
</evidence>
<evidence type="ECO:0000269" key="5">
    <source>
    </source>
</evidence>
<evidence type="ECO:0000305" key="6"/>
<reference key="1">
    <citation type="journal article" date="2010" name="J. Bacteriol.">
        <title>Short-term signatures of evolutionary change in the Salmonella enterica serovar typhimurium 14028 genome.</title>
        <authorList>
            <person name="Jarvik T."/>
            <person name="Smillie C."/>
            <person name="Groisman E.A."/>
            <person name="Ochman H."/>
        </authorList>
    </citation>
    <scope>NUCLEOTIDE SEQUENCE [LARGE SCALE GENOMIC DNA]</scope>
    <source>
        <strain>14028s / SGSC 2262</strain>
    </source>
</reference>
<reference key="2">
    <citation type="journal article" date="2009" name="Mol. Microbiol.">
        <title>Acid stress activation of the sigma(E) stress response in Salmonella enterica serovar Typhimurium.</title>
        <authorList>
            <person name="Muller C."/>
            <person name="Bang I.S."/>
            <person name="Velayudhan J."/>
            <person name="Karlinsey J."/>
            <person name="Papenfort K."/>
            <person name="Vogel J."/>
            <person name="Fang F.C."/>
        </authorList>
    </citation>
    <scope>FUNCTION</scope>
    <scope>DOMAIN</scope>
    <scope>DISRUPTION PHENOTYPE</scope>
    <source>
        <strain>14028s / SGSC 2262</strain>
    </source>
</reference>
<sequence>MFVKLLRSVAIGLIVGAILLAVMPSLRKINPIAVPQFDSTDETPASYNFAVRRAAPAVVNVYNRSMNSTAHNQLEIRTLGSGVIMDQRGYIITNKHVINDADQIIVALQDGRVFEALLVGSDSLTDLAVLKINATGGLPTIPINTKRTPHIGDVVLAIGNPYNLGQTITQGIISATGRIGLNPTGRQNFLQTDASINHGNSGGALVNSLGELMGINTLSFDKSNDGETPEGLGFAIPFQLATKIMDKLIRDGRVIRGYIGIGGREIAPLHAQQGSGMDPIQGIVVNEVTPNGPAALAGIQVNDLIISVNNKPAVSALETMDQVAEIRPGSVIPVVVMRDDKQLTFQVTVQEYPASN</sequence>